<geneLocation type="chloroplast"/>
<gene>
    <name evidence="1" type="primary">rpl36</name>
</gene>
<feature type="chain" id="PRO_0000344749" description="Large ribosomal subunit protein bL36c">
    <location>
        <begin position="1"/>
        <end position="37"/>
    </location>
</feature>
<name>RK36_CHLSC</name>
<proteinExistence type="inferred from homology"/>
<comment type="subcellular location">
    <subcellularLocation>
        <location>Plastid</location>
        <location>Chloroplast</location>
    </subcellularLocation>
</comment>
<comment type="similarity">
    <text evidence="1">Belongs to the bacterial ribosomal protein bL36 family.</text>
</comment>
<keyword id="KW-0150">Chloroplast</keyword>
<keyword id="KW-0934">Plastid</keyword>
<keyword id="KW-0687">Ribonucleoprotein</keyword>
<keyword id="KW-0689">Ribosomal protein</keyword>
<sequence>MKIRASVRKICEKCQLIRRRGRILVICSNPRHKQRQG</sequence>
<evidence type="ECO:0000255" key="1">
    <source>
        <dbReference type="HAMAP-Rule" id="MF_00251"/>
    </source>
</evidence>
<evidence type="ECO:0000305" key="2"/>
<organism>
    <name type="scientific">Chloranthus spicatus</name>
    <name type="common">Chulantree</name>
    <name type="synonym">Nigrina spicata</name>
    <dbReference type="NCBI Taxonomy" id="13006"/>
    <lineage>
        <taxon>Eukaryota</taxon>
        <taxon>Viridiplantae</taxon>
        <taxon>Streptophyta</taxon>
        <taxon>Embryophyta</taxon>
        <taxon>Tracheophyta</taxon>
        <taxon>Spermatophyta</taxon>
        <taxon>Magnoliopsida</taxon>
        <taxon>Chloranthales</taxon>
        <taxon>Chloranthaceae</taxon>
        <taxon>Chloranthus</taxon>
    </lineage>
</organism>
<accession>A6MMF6</accession>
<protein>
    <recommendedName>
        <fullName evidence="1">Large ribosomal subunit protein bL36c</fullName>
    </recommendedName>
    <alternativeName>
        <fullName evidence="2">50S ribosomal protein L36, chloroplastic</fullName>
    </alternativeName>
</protein>
<dbReference type="EMBL" id="EF380352">
    <property type="protein sequence ID" value="ABQ43293.1"/>
    <property type="molecule type" value="Genomic_DNA"/>
</dbReference>
<dbReference type="RefSeq" id="YP_001294132.1">
    <property type="nucleotide sequence ID" value="NC_009598.1"/>
</dbReference>
<dbReference type="SMR" id="A6MMF6"/>
<dbReference type="GeneID" id="5236489"/>
<dbReference type="GO" id="GO:0009507">
    <property type="term" value="C:chloroplast"/>
    <property type="evidence" value="ECO:0007669"/>
    <property type="project" value="UniProtKB-SubCell"/>
</dbReference>
<dbReference type="GO" id="GO:1990904">
    <property type="term" value="C:ribonucleoprotein complex"/>
    <property type="evidence" value="ECO:0007669"/>
    <property type="project" value="UniProtKB-KW"/>
</dbReference>
<dbReference type="GO" id="GO:0005840">
    <property type="term" value="C:ribosome"/>
    <property type="evidence" value="ECO:0007669"/>
    <property type="project" value="UniProtKB-KW"/>
</dbReference>
<dbReference type="GO" id="GO:0003735">
    <property type="term" value="F:structural constituent of ribosome"/>
    <property type="evidence" value="ECO:0007669"/>
    <property type="project" value="InterPro"/>
</dbReference>
<dbReference type="GO" id="GO:0006412">
    <property type="term" value="P:translation"/>
    <property type="evidence" value="ECO:0007669"/>
    <property type="project" value="UniProtKB-UniRule"/>
</dbReference>
<dbReference type="HAMAP" id="MF_00251">
    <property type="entry name" value="Ribosomal_bL36"/>
    <property type="match status" value="1"/>
</dbReference>
<dbReference type="InterPro" id="IPR000473">
    <property type="entry name" value="Ribosomal_bL36"/>
</dbReference>
<dbReference type="InterPro" id="IPR035977">
    <property type="entry name" value="Ribosomal_bL36_sp"/>
</dbReference>
<dbReference type="NCBIfam" id="TIGR01022">
    <property type="entry name" value="rpmJ_bact"/>
    <property type="match status" value="1"/>
</dbReference>
<dbReference type="PANTHER" id="PTHR42888">
    <property type="entry name" value="50S RIBOSOMAL PROTEIN L36, CHLOROPLASTIC"/>
    <property type="match status" value="1"/>
</dbReference>
<dbReference type="PANTHER" id="PTHR42888:SF1">
    <property type="entry name" value="LARGE RIBOSOMAL SUBUNIT PROTEIN BL36C"/>
    <property type="match status" value="1"/>
</dbReference>
<dbReference type="Pfam" id="PF00444">
    <property type="entry name" value="Ribosomal_L36"/>
    <property type="match status" value="1"/>
</dbReference>
<dbReference type="SUPFAM" id="SSF57840">
    <property type="entry name" value="Ribosomal protein L36"/>
    <property type="match status" value="1"/>
</dbReference>
<dbReference type="PROSITE" id="PS00828">
    <property type="entry name" value="RIBOSOMAL_L36"/>
    <property type="match status" value="1"/>
</dbReference>
<reference key="1">
    <citation type="journal article" date="2007" name="Mol. Phylogenet. Evol.">
        <title>Phylogenetic and evolutionary implications of complete chloroplast genome sequences of four early-diverging angiosperms: Buxus (Buxaceae), Chloranthus (Chloranthaceae), Dioscorea (Dioscoreaceae), and Illicium (Schisandraceae).</title>
        <authorList>
            <person name="Hansen D.R."/>
            <person name="Dastidar S.G."/>
            <person name="Cai Z."/>
            <person name="Penaflor C."/>
            <person name="Kuehl J.V."/>
            <person name="Boore J.L."/>
            <person name="Jansen R.K."/>
        </authorList>
    </citation>
    <scope>NUCLEOTIDE SEQUENCE [LARGE SCALE GENOMIC DNA]</scope>
</reference>